<dbReference type="EMBL" id="AY618657">
    <property type="protein sequence ID" value="AAT36743.1"/>
    <property type="molecule type" value="Genomic_DNA"/>
</dbReference>
<dbReference type="EMBL" id="AL049751">
    <property type="status" value="NOT_ANNOTATED_CDS"/>
    <property type="molecule type" value="Genomic_DNA"/>
</dbReference>
<dbReference type="EMBL" id="AL161535">
    <property type="status" value="NOT_ANNOTATED_CDS"/>
    <property type="molecule type" value="Genomic_DNA"/>
</dbReference>
<dbReference type="EMBL" id="CP002687">
    <property type="protein sequence ID" value="AEE83243.1"/>
    <property type="molecule type" value="Genomic_DNA"/>
</dbReference>
<dbReference type="EMBL" id="AY052261">
    <property type="protein sequence ID" value="AAK97731.1"/>
    <property type="molecule type" value="mRNA"/>
</dbReference>
<dbReference type="EMBL" id="BT002641">
    <property type="protein sequence ID" value="AAO11557.1"/>
    <property type="molecule type" value="mRNA"/>
</dbReference>
<dbReference type="EMBL" id="AY084742">
    <property type="protein sequence ID" value="AAM67243.1"/>
    <property type="molecule type" value="mRNA"/>
</dbReference>
<dbReference type="RefSeq" id="NP_567397.1">
    <property type="nucleotide sequence ID" value="NM_117389.3"/>
</dbReference>
<dbReference type="PDB" id="2MIE">
    <property type="method" value="NMR"/>
    <property type="chains" value="A=101-112"/>
</dbReference>
<dbReference type="PDB" id="5GQR">
    <property type="method" value="X-ray"/>
    <property type="resolution" value="3.50 A"/>
    <property type="chains" value="C=101-112"/>
</dbReference>
<dbReference type="PDBsum" id="2MIE"/>
<dbReference type="PDBsum" id="5GQR"/>
<dbReference type="SMR" id="Q941C5"/>
<dbReference type="BioGRID" id="12231">
    <property type="interactions" value="1"/>
</dbReference>
<dbReference type="FunCoup" id="Q941C5">
    <property type="interactions" value="1"/>
</dbReference>
<dbReference type="IntAct" id="Q941C5">
    <property type="interactions" value="1"/>
</dbReference>
<dbReference type="STRING" id="3702.Q941C5"/>
<dbReference type="GlyCosmos" id="Q941C5">
    <property type="glycosylation" value="1 site, No reported glycans"/>
</dbReference>
<dbReference type="GlyGen" id="Q941C5">
    <property type="glycosylation" value="1 site"/>
</dbReference>
<dbReference type="PaxDb" id="3702-AT4G13195.1"/>
<dbReference type="EnsemblPlants" id="AT4G13195.1">
    <property type="protein sequence ID" value="AT4G13195.1"/>
    <property type="gene ID" value="AT4G13195"/>
</dbReference>
<dbReference type="GeneID" id="826934"/>
<dbReference type="Gramene" id="AT4G13195.1">
    <property type="protein sequence ID" value="AT4G13195.1"/>
    <property type="gene ID" value="AT4G13195"/>
</dbReference>
<dbReference type="KEGG" id="ath:AT4G13195"/>
<dbReference type="Araport" id="AT4G13195"/>
<dbReference type="TAIR" id="AT4G13195">
    <property type="gene designation" value="CLE44"/>
</dbReference>
<dbReference type="eggNOG" id="ENOG502S9E3">
    <property type="taxonomic scope" value="Eukaryota"/>
</dbReference>
<dbReference type="HOGENOM" id="CLU_161000_0_0_1"/>
<dbReference type="InParanoid" id="Q941C5"/>
<dbReference type="OMA" id="THPIHES"/>
<dbReference type="PhylomeDB" id="Q941C5"/>
<dbReference type="PRO" id="PR:Q941C5"/>
<dbReference type="Proteomes" id="UP000006548">
    <property type="component" value="Chromosome 4"/>
</dbReference>
<dbReference type="ExpressionAtlas" id="Q941C5">
    <property type="expression patterns" value="baseline and differential"/>
</dbReference>
<dbReference type="GO" id="GO:0048046">
    <property type="term" value="C:apoplast"/>
    <property type="evidence" value="ECO:0000314"/>
    <property type="project" value="UniProtKB"/>
</dbReference>
<dbReference type="GO" id="GO:0033612">
    <property type="term" value="F:receptor serine/threonine kinase binding"/>
    <property type="evidence" value="ECO:0000353"/>
    <property type="project" value="UniProtKB"/>
</dbReference>
<dbReference type="GO" id="GO:0090506">
    <property type="term" value="P:axillary shoot meristem initiation"/>
    <property type="evidence" value="ECO:0000314"/>
    <property type="project" value="TAIR"/>
</dbReference>
<dbReference type="GO" id="GO:0045168">
    <property type="term" value="P:cell-cell signaling involved in cell fate commitment"/>
    <property type="evidence" value="ECO:0000250"/>
    <property type="project" value="UniProtKB"/>
</dbReference>
<dbReference type="GO" id="GO:0010078">
    <property type="term" value="P:maintenance of root meristem identity"/>
    <property type="evidence" value="ECO:0000314"/>
    <property type="project" value="UniProtKB"/>
</dbReference>
<dbReference type="GO" id="GO:0010088">
    <property type="term" value="P:phloem development"/>
    <property type="evidence" value="ECO:0000314"/>
    <property type="project" value="UniProtKB"/>
</dbReference>
<dbReference type="GO" id="GO:0010087">
    <property type="term" value="P:phloem or xylem histogenesis"/>
    <property type="evidence" value="ECO:0000314"/>
    <property type="project" value="TAIR"/>
</dbReference>
<dbReference type="GO" id="GO:0010067">
    <property type="term" value="P:procambium histogenesis"/>
    <property type="evidence" value="ECO:0000314"/>
    <property type="project" value="UniProtKB"/>
</dbReference>
<dbReference type="GO" id="GO:0045595">
    <property type="term" value="P:regulation of cell differentiation"/>
    <property type="evidence" value="ECO:0000314"/>
    <property type="project" value="UniProtKB"/>
</dbReference>
<dbReference type="GO" id="GO:0010089">
    <property type="term" value="P:xylem development"/>
    <property type="evidence" value="ECO:0000314"/>
    <property type="project" value="UniProtKB"/>
</dbReference>
<dbReference type="InterPro" id="IPR037495">
    <property type="entry name" value="CLE41/42/44"/>
</dbReference>
<dbReference type="PANTHER" id="PTHR35301">
    <property type="entry name" value="CLAVATA3/ESR (CLE)-RELATED PROTEIN 41-RELATED"/>
    <property type="match status" value="1"/>
</dbReference>
<dbReference type="PANTHER" id="PTHR35301:SF1">
    <property type="entry name" value="CLAVATA3_ESR (CLE)-RELATED PROTEIN 41-RELATED"/>
    <property type="match status" value="1"/>
</dbReference>
<name>CLE44_ARATH</name>
<comment type="function">
    <molecule>CLE44p</molecule>
    <text evidence="4 5 6 8">Extracellular signal peptide that regulates cell fate. May act with TDR as a ligand-receptor pair in a signal transduction pathway that represses tracheary element differentiation but promotes the formation of procambial cells adjacent to phloem cells in the veins. Regulates the transition of protophloem cells from proliferation to differentiation, thus impinging on postembryonic growth capacity of the root meristem; this signaling pathway requires CRN and CLV2 (PubMed:28607033).</text>
</comment>
<comment type="subunit">
    <molecule>CLE44p</molecule>
    <text evidence="6 7">Interacts specifically with the leucine-rich repeat receptor-like protein kinase TDR, especially in the presence of SERK2.</text>
</comment>
<comment type="subcellular location">
    <molecule>CLE44p</molecule>
    <subcellularLocation>
        <location evidence="6">Secreted</location>
        <location evidence="6">Extracellular space</location>
    </subcellularLocation>
    <text evidence="6">Probably secreted from the phloem cells and distributed in the procambial region.</text>
</comment>
<comment type="tissue specificity">
    <molecule>CLE44p</molecule>
    <text evidence="4 6">Mostly expressed in flowers and leaves. Widely expressed along the vascular strands. In roots and hypocotyls, present in endodermal cells as well as cells in the phloem and the adjacent pericycle.</text>
</comment>
<comment type="PTM">
    <molecule>CLE44p</molecule>
    <text evidence="1">The O-glycosylation (arabinosylation) of the hydroxyproline Pro-107 enhances binding affinity of the CLE44p peptide for its receptor.</text>
</comment>
<comment type="similarity">
    <text evidence="11">Belongs to the CLV3/ESR signal peptide family.</text>
</comment>
<sequence>MATTIDQTSIKSLHFHQVIRLIITIIFLAFLFLIGPTSSMNHHLHESSSKNTMAPSKRFLLQPSTPSSSTMKMRPTAHPRRSGTSSSSARKRRREFRAEAHEVPSGPNPISN</sequence>
<evidence type="ECO:0000250" key="1">
    <source>
        <dbReference type="UniProtKB" id="O49519"/>
    </source>
</evidence>
<evidence type="ECO:0000255" key="2"/>
<evidence type="ECO:0000256" key="3">
    <source>
        <dbReference type="SAM" id="MobiDB-lite"/>
    </source>
</evidence>
<evidence type="ECO:0000269" key="4">
    <source>
    </source>
</evidence>
<evidence type="ECO:0000269" key="5">
    <source>
    </source>
</evidence>
<evidence type="ECO:0000269" key="6">
    <source>
    </source>
</evidence>
<evidence type="ECO:0000269" key="7">
    <source>
    </source>
</evidence>
<evidence type="ECO:0000269" key="8">
    <source>
    </source>
</evidence>
<evidence type="ECO:0000303" key="9">
    <source>
    </source>
</evidence>
<evidence type="ECO:0000303" key="10">
    <source>
    </source>
</evidence>
<evidence type="ECO:0000305" key="11"/>
<evidence type="ECO:0000312" key="12">
    <source>
        <dbReference type="Araport" id="AT4G13195"/>
    </source>
</evidence>
<evidence type="ECO:0000312" key="13">
    <source>
        <dbReference type="EMBL" id="AL049751"/>
    </source>
</evidence>
<evidence type="ECO:0007829" key="14">
    <source>
        <dbReference type="PDB" id="2MIE"/>
    </source>
</evidence>
<keyword id="KW-0002">3D-structure</keyword>
<keyword id="KW-0217">Developmental protein</keyword>
<keyword id="KW-0221">Differentiation</keyword>
<keyword id="KW-0325">Glycoprotein</keyword>
<keyword id="KW-0379">Hydroxylation</keyword>
<keyword id="KW-1185">Reference proteome</keyword>
<keyword id="KW-0964">Secreted</keyword>
<keyword id="KW-0732">Signal</keyword>
<accession>Q941C5</accession>
<accession>Q8LFN1</accession>
<organism>
    <name type="scientific">Arabidopsis thaliana</name>
    <name type="common">Mouse-ear cress</name>
    <dbReference type="NCBI Taxonomy" id="3702"/>
    <lineage>
        <taxon>Eukaryota</taxon>
        <taxon>Viridiplantae</taxon>
        <taxon>Streptophyta</taxon>
        <taxon>Embryophyta</taxon>
        <taxon>Tracheophyta</taxon>
        <taxon>Spermatophyta</taxon>
        <taxon>Magnoliopsida</taxon>
        <taxon>eudicotyledons</taxon>
        <taxon>Gunneridae</taxon>
        <taxon>Pentapetalae</taxon>
        <taxon>rosids</taxon>
        <taxon>malvids</taxon>
        <taxon>Brassicales</taxon>
        <taxon>Brassicaceae</taxon>
        <taxon>Camelineae</taxon>
        <taxon>Arabidopsis</taxon>
    </lineage>
</organism>
<protein>
    <recommendedName>
        <fullName evidence="9">CLAVATA3/ESR (CLE)-related protein 44</fullName>
    </recommendedName>
    <alternativeName>
        <fullName evidence="10">Tracheary element differentiation inhibitory factor-like protein</fullName>
        <shortName evidence="10">TDIF-like protein</shortName>
    </alternativeName>
    <component>
        <recommendedName>
            <fullName evidence="9">CLE44p</fullName>
        </recommendedName>
    </component>
</protein>
<gene>
    <name evidence="9" type="primary">CLE44</name>
    <name evidence="12" type="ordered locus">At4g13195</name>
    <name evidence="13" type="ORF">F17N18</name>
</gene>
<reference key="1">
    <citation type="journal article" date="2006" name="Plant Physiol.">
        <title>Gain-of-function phenotypes of many CLAVATA3/ESR genes, including four new family members, correlate with tandem variations in the conserved CLAVATA3/ESR domain.</title>
        <authorList>
            <person name="Strabala T.J."/>
            <person name="O'donnell P.J."/>
            <person name="Smit A.-M."/>
            <person name="Ampomah-Dwamena C."/>
            <person name="Martin E.J."/>
            <person name="Netzler N."/>
            <person name="Nieuwenhuizen N.J."/>
            <person name="Quinn B.D."/>
            <person name="Foote H.C.C."/>
            <person name="Hudson K.R."/>
        </authorList>
    </citation>
    <scope>NUCLEOTIDE SEQUENCE [GENOMIC DNA]</scope>
    <scope>FUNCTION</scope>
    <scope>TISSUE SPECIFICITY</scope>
    <scope>GENE FAMILY</scope>
    <source>
        <strain>cv. Columbia</strain>
    </source>
</reference>
<reference key="2">
    <citation type="journal article" date="1999" name="Nature">
        <title>Sequence and analysis of chromosome 4 of the plant Arabidopsis thaliana.</title>
        <authorList>
            <person name="Mayer K.F.X."/>
            <person name="Schueller C."/>
            <person name="Wambutt R."/>
            <person name="Murphy G."/>
            <person name="Volckaert G."/>
            <person name="Pohl T."/>
            <person name="Duesterhoeft A."/>
            <person name="Stiekema W."/>
            <person name="Entian K.-D."/>
            <person name="Terryn N."/>
            <person name="Harris B."/>
            <person name="Ansorge W."/>
            <person name="Brandt P."/>
            <person name="Grivell L.A."/>
            <person name="Rieger M."/>
            <person name="Weichselgartner M."/>
            <person name="de Simone V."/>
            <person name="Obermaier B."/>
            <person name="Mache R."/>
            <person name="Mueller M."/>
            <person name="Kreis M."/>
            <person name="Delseny M."/>
            <person name="Puigdomenech P."/>
            <person name="Watson M."/>
            <person name="Schmidtheini T."/>
            <person name="Reichert B."/>
            <person name="Portetelle D."/>
            <person name="Perez-Alonso M."/>
            <person name="Boutry M."/>
            <person name="Bancroft I."/>
            <person name="Vos P."/>
            <person name="Hoheisel J."/>
            <person name="Zimmermann W."/>
            <person name="Wedler H."/>
            <person name="Ridley P."/>
            <person name="Langham S.-A."/>
            <person name="McCullagh B."/>
            <person name="Bilham L."/>
            <person name="Robben J."/>
            <person name="van der Schueren J."/>
            <person name="Grymonprez B."/>
            <person name="Chuang Y.-J."/>
            <person name="Vandenbussche F."/>
            <person name="Braeken M."/>
            <person name="Weltjens I."/>
            <person name="Voet M."/>
            <person name="Bastiaens I."/>
            <person name="Aert R."/>
            <person name="Defoor E."/>
            <person name="Weitzenegger T."/>
            <person name="Bothe G."/>
            <person name="Ramsperger U."/>
            <person name="Hilbert H."/>
            <person name="Braun M."/>
            <person name="Holzer E."/>
            <person name="Brandt A."/>
            <person name="Peters S."/>
            <person name="van Staveren M."/>
            <person name="Dirkse W."/>
            <person name="Mooijman P."/>
            <person name="Klein Lankhorst R."/>
            <person name="Rose M."/>
            <person name="Hauf J."/>
            <person name="Koetter P."/>
            <person name="Berneiser S."/>
            <person name="Hempel S."/>
            <person name="Feldpausch M."/>
            <person name="Lamberth S."/>
            <person name="Van den Daele H."/>
            <person name="De Keyser A."/>
            <person name="Buysshaert C."/>
            <person name="Gielen J."/>
            <person name="Villarroel R."/>
            <person name="De Clercq R."/>
            <person name="van Montagu M."/>
            <person name="Rogers J."/>
            <person name="Cronin A."/>
            <person name="Quail M.A."/>
            <person name="Bray-Allen S."/>
            <person name="Clark L."/>
            <person name="Doggett J."/>
            <person name="Hall S."/>
            <person name="Kay M."/>
            <person name="Lennard N."/>
            <person name="McLay K."/>
            <person name="Mayes R."/>
            <person name="Pettett A."/>
            <person name="Rajandream M.A."/>
            <person name="Lyne M."/>
            <person name="Benes V."/>
            <person name="Rechmann S."/>
            <person name="Borkova D."/>
            <person name="Bloecker H."/>
            <person name="Scharfe M."/>
            <person name="Grimm M."/>
            <person name="Loehnert T.-H."/>
            <person name="Dose S."/>
            <person name="de Haan M."/>
            <person name="Maarse A.C."/>
            <person name="Schaefer M."/>
            <person name="Mueller-Auer S."/>
            <person name="Gabel C."/>
            <person name="Fuchs M."/>
            <person name="Fartmann B."/>
            <person name="Granderath K."/>
            <person name="Dauner D."/>
            <person name="Herzl A."/>
            <person name="Neumann S."/>
            <person name="Argiriou A."/>
            <person name="Vitale D."/>
            <person name="Liguori R."/>
            <person name="Piravandi E."/>
            <person name="Massenet O."/>
            <person name="Quigley F."/>
            <person name="Clabauld G."/>
            <person name="Muendlein A."/>
            <person name="Felber R."/>
            <person name="Schnabl S."/>
            <person name="Hiller R."/>
            <person name="Schmidt W."/>
            <person name="Lecharny A."/>
            <person name="Aubourg S."/>
            <person name="Chefdor F."/>
            <person name="Cooke R."/>
            <person name="Berger C."/>
            <person name="Monfort A."/>
            <person name="Casacuberta E."/>
            <person name="Gibbons T."/>
            <person name="Weber N."/>
            <person name="Vandenbol M."/>
            <person name="Bargues M."/>
            <person name="Terol J."/>
            <person name="Torres A."/>
            <person name="Perez-Perez A."/>
            <person name="Purnelle B."/>
            <person name="Bent E."/>
            <person name="Johnson S."/>
            <person name="Tacon D."/>
            <person name="Jesse T."/>
            <person name="Heijnen L."/>
            <person name="Schwarz S."/>
            <person name="Scholler P."/>
            <person name="Heber S."/>
            <person name="Francs P."/>
            <person name="Bielke C."/>
            <person name="Frishman D."/>
            <person name="Haase D."/>
            <person name="Lemcke K."/>
            <person name="Mewes H.-W."/>
            <person name="Stocker S."/>
            <person name="Zaccaria P."/>
            <person name="Bevan M."/>
            <person name="Wilson R.K."/>
            <person name="de la Bastide M."/>
            <person name="Habermann K."/>
            <person name="Parnell L."/>
            <person name="Dedhia N."/>
            <person name="Gnoj L."/>
            <person name="Schutz K."/>
            <person name="Huang E."/>
            <person name="Spiegel L."/>
            <person name="Sekhon M."/>
            <person name="Murray J."/>
            <person name="Sheet P."/>
            <person name="Cordes M."/>
            <person name="Abu-Threideh J."/>
            <person name="Stoneking T."/>
            <person name="Kalicki J."/>
            <person name="Graves T."/>
            <person name="Harmon G."/>
            <person name="Edwards J."/>
            <person name="Latreille P."/>
            <person name="Courtney L."/>
            <person name="Cloud J."/>
            <person name="Abbott A."/>
            <person name="Scott K."/>
            <person name="Johnson D."/>
            <person name="Minx P."/>
            <person name="Bentley D."/>
            <person name="Fulton B."/>
            <person name="Miller N."/>
            <person name="Greco T."/>
            <person name="Kemp K."/>
            <person name="Kramer J."/>
            <person name="Fulton L."/>
            <person name="Mardis E."/>
            <person name="Dante M."/>
            <person name="Pepin K."/>
            <person name="Hillier L.W."/>
            <person name="Nelson J."/>
            <person name="Spieth J."/>
            <person name="Ryan E."/>
            <person name="Andrews S."/>
            <person name="Geisel C."/>
            <person name="Layman D."/>
            <person name="Du H."/>
            <person name="Ali J."/>
            <person name="Berghoff A."/>
            <person name="Jones K."/>
            <person name="Drone K."/>
            <person name="Cotton M."/>
            <person name="Joshu C."/>
            <person name="Antonoiu B."/>
            <person name="Zidanic M."/>
            <person name="Strong C."/>
            <person name="Sun H."/>
            <person name="Lamar B."/>
            <person name="Yordan C."/>
            <person name="Ma P."/>
            <person name="Zhong J."/>
            <person name="Preston R."/>
            <person name="Vil D."/>
            <person name="Shekher M."/>
            <person name="Matero A."/>
            <person name="Shah R."/>
            <person name="Swaby I.K."/>
            <person name="O'Shaughnessy A."/>
            <person name="Rodriguez M."/>
            <person name="Hoffman J."/>
            <person name="Till S."/>
            <person name="Granat S."/>
            <person name="Shohdy N."/>
            <person name="Hasegawa A."/>
            <person name="Hameed A."/>
            <person name="Lodhi M."/>
            <person name="Johnson A."/>
            <person name="Chen E."/>
            <person name="Marra M.A."/>
            <person name="Martienssen R."/>
            <person name="McCombie W.R."/>
        </authorList>
    </citation>
    <scope>NUCLEOTIDE SEQUENCE [LARGE SCALE GENOMIC DNA]</scope>
    <source>
        <strain>cv. Columbia</strain>
    </source>
</reference>
<reference key="3">
    <citation type="journal article" date="2017" name="Plant J.">
        <title>Araport11: a complete reannotation of the Arabidopsis thaliana reference genome.</title>
        <authorList>
            <person name="Cheng C.Y."/>
            <person name="Krishnakumar V."/>
            <person name="Chan A.P."/>
            <person name="Thibaud-Nissen F."/>
            <person name="Schobel S."/>
            <person name="Town C.D."/>
        </authorList>
    </citation>
    <scope>GENOME REANNOTATION</scope>
    <source>
        <strain>cv. Columbia</strain>
    </source>
</reference>
<reference key="4">
    <citation type="journal article" date="2003" name="Science">
        <title>Empirical analysis of transcriptional activity in the Arabidopsis genome.</title>
        <authorList>
            <person name="Yamada K."/>
            <person name="Lim J."/>
            <person name="Dale J.M."/>
            <person name="Chen H."/>
            <person name="Shinn P."/>
            <person name="Palm C.J."/>
            <person name="Southwick A.M."/>
            <person name="Wu H.C."/>
            <person name="Kim C.J."/>
            <person name="Nguyen M."/>
            <person name="Pham P.K."/>
            <person name="Cheuk R.F."/>
            <person name="Karlin-Newmann G."/>
            <person name="Liu S.X."/>
            <person name="Lam B."/>
            <person name="Sakano H."/>
            <person name="Wu T."/>
            <person name="Yu G."/>
            <person name="Miranda M."/>
            <person name="Quach H.L."/>
            <person name="Tripp M."/>
            <person name="Chang C.H."/>
            <person name="Lee J.M."/>
            <person name="Toriumi M.J."/>
            <person name="Chan M.M."/>
            <person name="Tang C.C."/>
            <person name="Onodera C.S."/>
            <person name="Deng J.M."/>
            <person name="Akiyama K."/>
            <person name="Ansari Y."/>
            <person name="Arakawa T."/>
            <person name="Banh J."/>
            <person name="Banno F."/>
            <person name="Bowser L."/>
            <person name="Brooks S.Y."/>
            <person name="Carninci P."/>
            <person name="Chao Q."/>
            <person name="Choy N."/>
            <person name="Enju A."/>
            <person name="Goldsmith A.D."/>
            <person name="Gurjal M."/>
            <person name="Hansen N.F."/>
            <person name="Hayashizaki Y."/>
            <person name="Johnson-Hopson C."/>
            <person name="Hsuan V.W."/>
            <person name="Iida K."/>
            <person name="Karnes M."/>
            <person name="Khan S."/>
            <person name="Koesema E."/>
            <person name="Ishida J."/>
            <person name="Jiang P.X."/>
            <person name="Jones T."/>
            <person name="Kawai J."/>
            <person name="Kamiya A."/>
            <person name="Meyers C."/>
            <person name="Nakajima M."/>
            <person name="Narusaka M."/>
            <person name="Seki M."/>
            <person name="Sakurai T."/>
            <person name="Satou M."/>
            <person name="Tamse R."/>
            <person name="Vaysberg M."/>
            <person name="Wallender E.K."/>
            <person name="Wong C."/>
            <person name="Yamamura Y."/>
            <person name="Yuan S."/>
            <person name="Shinozaki K."/>
            <person name="Davis R.W."/>
            <person name="Theologis A."/>
            <person name="Ecker J.R."/>
        </authorList>
    </citation>
    <scope>NUCLEOTIDE SEQUENCE [LARGE SCALE MRNA]</scope>
    <source>
        <strain>cv. Columbia</strain>
    </source>
</reference>
<reference key="5">
    <citation type="submission" date="2002-03" db="EMBL/GenBank/DDBJ databases">
        <title>Full-length cDNA from Arabidopsis thaliana.</title>
        <authorList>
            <person name="Brover V.V."/>
            <person name="Troukhan M.E."/>
            <person name="Alexandrov N.A."/>
            <person name="Lu Y.-P."/>
            <person name="Flavell R.B."/>
            <person name="Feldmann K.A."/>
        </authorList>
    </citation>
    <scope>NUCLEOTIDE SEQUENCE [LARGE SCALE MRNA]</scope>
</reference>
<reference key="6">
    <citation type="journal article" date="2006" name="Science">
        <title>Dodeca-CLE peptides as suppressors of plant stem cell differentiation.</title>
        <authorList>
            <person name="Ito Y."/>
            <person name="Nakanomyo I."/>
            <person name="Motose H."/>
            <person name="Iwamoto K."/>
            <person name="Sawa S."/>
            <person name="Dohmae N."/>
            <person name="Fukuda H."/>
        </authorList>
    </citation>
    <scope>FUNCTION</scope>
</reference>
<reference key="7">
    <citation type="journal article" date="2008" name="Cell. Mol. Life Sci.">
        <title>The CLE family of plant polypeptide signaling molecules.</title>
        <authorList>
            <person name="Jun J.H."/>
            <person name="Fiume E."/>
            <person name="Fletcher J.C."/>
        </authorList>
    </citation>
    <scope>REVIEW</scope>
</reference>
<reference key="8">
    <citation type="journal article" date="2008" name="Curr. Opin. Plant Biol.">
        <title>Diverse and conserved roles of CLE peptides.</title>
        <authorList>
            <person name="Mitchum M.G."/>
            <person name="Wang X."/>
            <person name="Davis E.L."/>
        </authorList>
    </citation>
    <scope>REVIEW</scope>
</reference>
<reference key="9">
    <citation type="journal article" date="2008" name="Proc. Natl. Acad. Sci. U.S.A.">
        <title>Non-cell-autonomous control of vascular stem cell fate by a CLE peptide/receptor system.</title>
        <authorList>
            <person name="Hirakawa Y."/>
            <person name="Shinohara H."/>
            <person name="Kondo Y."/>
            <person name="Inoue A."/>
            <person name="Nakanomyo I."/>
            <person name="Ogawa M."/>
            <person name="Sawa S."/>
            <person name="Ohashi-Ito K."/>
            <person name="Matsubayashi Y."/>
            <person name="Fukuda H."/>
        </authorList>
    </citation>
    <scope>FUNCTION</scope>
    <scope>MUTAGENESIS OF PRO-107</scope>
    <scope>INTERACTION WITH TDR</scope>
    <scope>TISSUE SPECIFICITY</scope>
    <scope>SUBCELLULAR LOCATION</scope>
</reference>
<reference key="10">
    <citation type="journal article" date="2010" name="Protoplasma">
        <title>CLE peptide signaling during plant development.</title>
        <authorList>
            <person name="Wang G."/>
            <person name="Fiers M."/>
        </authorList>
    </citation>
    <scope>REVIEW</scope>
</reference>
<reference key="11">
    <citation type="journal article" date="2017" name="EMBO Rep.">
        <title>Perception of root-active CLE peptides requires CORYNE function in the phloem vasculature.</title>
        <authorList>
            <person name="Hazak O."/>
            <person name="Brandt B."/>
            <person name="Cattaneo P."/>
            <person name="Santiago J."/>
            <person name="Rodriguez-Villalon A."/>
            <person name="Hothorn M."/>
            <person name="Hardtke C.S."/>
        </authorList>
    </citation>
    <scope>FUNCTION</scope>
    <source>
        <strain>cv. Columbia</strain>
    </source>
</reference>
<reference key="12">
    <citation type="journal article" date="2016" name="Mol. Plant">
        <title>SERK family receptor-like kinases function as co-receptors with PXY for plant vascular development.</title>
        <authorList>
            <person name="Zhang H."/>
            <person name="Lin X."/>
            <person name="Han Z."/>
            <person name="Wang J."/>
            <person name="Qu L.-J."/>
            <person name="Chai J."/>
        </authorList>
    </citation>
    <scope>X-RAY CRYSTALLOGRAPHY (3.50 ANGSTROMS) OF 101-112 IN COMPLEX WITH SERK2 AND TDR</scope>
</reference>
<feature type="signal peptide" evidence="2">
    <location>
        <begin position="1"/>
        <end position="39"/>
    </location>
</feature>
<feature type="chain" id="PRO_0000401287" description="CLAVATA3/ESR (CLE)-related protein 44">
    <location>
        <begin position="40"/>
        <end position="112"/>
    </location>
</feature>
<feature type="peptide" id="PRO_0000401288" description="CLE44p" evidence="1">
    <location>
        <begin position="101"/>
        <end position="112"/>
    </location>
</feature>
<feature type="region of interest" description="Disordered" evidence="3">
    <location>
        <begin position="41"/>
        <end position="112"/>
    </location>
</feature>
<feature type="compositionally biased region" description="Polar residues" evidence="3">
    <location>
        <begin position="62"/>
        <end position="71"/>
    </location>
</feature>
<feature type="modified residue" description="Hydroxyproline" evidence="1">
    <location>
        <position position="104"/>
    </location>
</feature>
<feature type="modified residue" description="Hydroxyproline" evidence="1">
    <location>
        <position position="107"/>
    </location>
</feature>
<feature type="glycosylation site" description="O-linked (Ara...) hydroxyproline" evidence="1">
    <location>
        <position position="107"/>
    </location>
</feature>
<feature type="mutagenesis site" description="Impaired repression of tracheary element differentiation." evidence="6">
    <original>P</original>
    <variation>A</variation>
    <location>
        <position position="107"/>
    </location>
</feature>
<feature type="sequence conflict" description="In Ref. 5; AAM67243." evidence="11" ref="5">
    <original>FHQVIRL</original>
    <variation>LHQLIRF</variation>
    <location>
        <begin position="15"/>
        <end position="21"/>
    </location>
</feature>
<feature type="strand" evidence="14">
    <location>
        <begin position="105"/>
        <end position="110"/>
    </location>
</feature>
<proteinExistence type="evidence at protein level"/>